<evidence type="ECO:0000305" key="1"/>
<gene>
    <name type="primary">PCMP-E17</name>
    <name type="ordered locus">At4g14170</name>
    <name type="ORF">dl3125c</name>
    <name type="ORF">FCAALL.113</name>
</gene>
<proteinExistence type="evidence at transcript level"/>
<dbReference type="EMBL" id="Z97335">
    <property type="protein sequence ID" value="CAB10196.1"/>
    <property type="status" value="ALT_SEQ"/>
    <property type="molecule type" value="Genomic_DNA"/>
</dbReference>
<dbReference type="EMBL" id="AL161538">
    <property type="protein sequence ID" value="CAB78459.1"/>
    <property type="status" value="ALT_SEQ"/>
    <property type="molecule type" value="Genomic_DNA"/>
</dbReference>
<dbReference type="EMBL" id="CP002687">
    <property type="protein sequence ID" value="AEE83389.1"/>
    <property type="molecule type" value="Genomic_DNA"/>
</dbReference>
<dbReference type="EMBL" id="BT015829">
    <property type="protein sequence ID" value="AAU94392.1"/>
    <property type="status" value="ALT_INIT"/>
    <property type="molecule type" value="mRNA"/>
</dbReference>
<dbReference type="EMBL" id="BT020211">
    <property type="protein sequence ID" value="AAV59277.1"/>
    <property type="molecule type" value="mRNA"/>
</dbReference>
<dbReference type="PIR" id="B71403">
    <property type="entry name" value="B71403"/>
</dbReference>
<dbReference type="RefSeq" id="NP_193153.3">
    <property type="nucleotide sequence ID" value="NM_117494.4"/>
</dbReference>
<dbReference type="SMR" id="Q5XEY7"/>
<dbReference type="FunCoup" id="Q5XEY7">
    <property type="interactions" value="72"/>
</dbReference>
<dbReference type="STRING" id="3702.Q5XEY7"/>
<dbReference type="PaxDb" id="3702-AT4G14170.1"/>
<dbReference type="EnsemblPlants" id="AT4G14170.1">
    <property type="protein sequence ID" value="AT4G14170.1"/>
    <property type="gene ID" value="AT4G14170"/>
</dbReference>
<dbReference type="GeneID" id="827057"/>
<dbReference type="Gramene" id="AT4G14170.1">
    <property type="protein sequence ID" value="AT4G14170.1"/>
    <property type="gene ID" value="AT4G14170"/>
</dbReference>
<dbReference type="KEGG" id="ath:AT4G14170"/>
<dbReference type="Araport" id="AT4G14170"/>
<dbReference type="TAIR" id="AT4G14170">
    <property type="gene designation" value="MEF32"/>
</dbReference>
<dbReference type="eggNOG" id="KOG4197">
    <property type="taxonomic scope" value="Eukaryota"/>
</dbReference>
<dbReference type="HOGENOM" id="CLU_002706_0_2_1"/>
<dbReference type="InParanoid" id="Q5XEY7"/>
<dbReference type="OMA" id="FHGLCVK"/>
<dbReference type="PhylomeDB" id="Q5XEY7"/>
<dbReference type="PRO" id="PR:Q5XEY7"/>
<dbReference type="Proteomes" id="UP000006548">
    <property type="component" value="Chromosome 4"/>
</dbReference>
<dbReference type="ExpressionAtlas" id="Q5XEY7">
    <property type="expression patterns" value="baseline and differential"/>
</dbReference>
<dbReference type="GO" id="GO:0003723">
    <property type="term" value="F:RNA binding"/>
    <property type="evidence" value="ECO:0007669"/>
    <property type="project" value="InterPro"/>
</dbReference>
<dbReference type="GO" id="GO:0009451">
    <property type="term" value="P:RNA modification"/>
    <property type="evidence" value="ECO:0007669"/>
    <property type="project" value="InterPro"/>
</dbReference>
<dbReference type="FunFam" id="1.25.40.10:FF:000344">
    <property type="entry name" value="Pentatricopeptide repeat-containing protein"/>
    <property type="match status" value="1"/>
</dbReference>
<dbReference type="FunFam" id="1.25.40.10:FF:000878">
    <property type="entry name" value="Pentatricopeptide repeat-containing protein"/>
    <property type="match status" value="1"/>
</dbReference>
<dbReference type="Gene3D" id="1.25.40.10">
    <property type="entry name" value="Tetratricopeptide repeat domain"/>
    <property type="match status" value="3"/>
</dbReference>
<dbReference type="InterPro" id="IPR046848">
    <property type="entry name" value="E_motif"/>
</dbReference>
<dbReference type="InterPro" id="IPR002885">
    <property type="entry name" value="Pentatricopeptide_rpt"/>
</dbReference>
<dbReference type="InterPro" id="IPR046960">
    <property type="entry name" value="PPR_At4g14850-like_plant"/>
</dbReference>
<dbReference type="InterPro" id="IPR011990">
    <property type="entry name" value="TPR-like_helical_dom_sf"/>
</dbReference>
<dbReference type="NCBIfam" id="TIGR00756">
    <property type="entry name" value="PPR"/>
    <property type="match status" value="2"/>
</dbReference>
<dbReference type="PANTHER" id="PTHR47926:SF344">
    <property type="entry name" value="OS07G0636900 PROTEIN"/>
    <property type="match status" value="1"/>
</dbReference>
<dbReference type="PANTHER" id="PTHR47926">
    <property type="entry name" value="PENTATRICOPEPTIDE REPEAT-CONTAINING PROTEIN"/>
    <property type="match status" value="1"/>
</dbReference>
<dbReference type="Pfam" id="PF20431">
    <property type="entry name" value="E_motif"/>
    <property type="match status" value="1"/>
</dbReference>
<dbReference type="Pfam" id="PF01535">
    <property type="entry name" value="PPR"/>
    <property type="match status" value="4"/>
</dbReference>
<dbReference type="Pfam" id="PF13041">
    <property type="entry name" value="PPR_2"/>
    <property type="match status" value="1"/>
</dbReference>
<dbReference type="PROSITE" id="PS51375">
    <property type="entry name" value="PPR"/>
    <property type="match status" value="8"/>
</dbReference>
<reference key="1">
    <citation type="journal article" date="1998" name="Nature">
        <title>Analysis of 1.9 Mb of contiguous sequence from chromosome 4 of Arabidopsis thaliana.</title>
        <authorList>
            <person name="Bevan M."/>
            <person name="Bancroft I."/>
            <person name="Bent E."/>
            <person name="Love K."/>
            <person name="Goodman H.M."/>
            <person name="Dean C."/>
            <person name="Bergkamp R."/>
            <person name="Dirkse W."/>
            <person name="van Staveren M."/>
            <person name="Stiekema W."/>
            <person name="Drost L."/>
            <person name="Ridley P."/>
            <person name="Hudson S.-A."/>
            <person name="Patel K."/>
            <person name="Murphy G."/>
            <person name="Piffanelli P."/>
            <person name="Wedler H."/>
            <person name="Wedler E."/>
            <person name="Wambutt R."/>
            <person name="Weitzenegger T."/>
            <person name="Pohl T."/>
            <person name="Terryn N."/>
            <person name="Gielen J."/>
            <person name="Villarroel R."/>
            <person name="De Clercq R."/>
            <person name="van Montagu M."/>
            <person name="Lecharny A."/>
            <person name="Aubourg S."/>
            <person name="Gy I."/>
            <person name="Kreis M."/>
            <person name="Lao N."/>
            <person name="Kavanagh T."/>
            <person name="Hempel S."/>
            <person name="Kotter P."/>
            <person name="Entian K.-D."/>
            <person name="Rieger M."/>
            <person name="Schaefer M."/>
            <person name="Funk B."/>
            <person name="Mueller-Auer S."/>
            <person name="Silvey M."/>
            <person name="James R."/>
            <person name="Monfort A."/>
            <person name="Pons A."/>
            <person name="Puigdomenech P."/>
            <person name="Douka A."/>
            <person name="Voukelatou E."/>
            <person name="Milioni D."/>
            <person name="Hatzopoulos P."/>
            <person name="Piravandi E."/>
            <person name="Obermaier B."/>
            <person name="Hilbert H."/>
            <person name="Duesterhoeft A."/>
            <person name="Moores T."/>
            <person name="Jones J.D.G."/>
            <person name="Eneva T."/>
            <person name="Palme K."/>
            <person name="Benes V."/>
            <person name="Rechmann S."/>
            <person name="Ansorge W."/>
            <person name="Cooke R."/>
            <person name="Berger C."/>
            <person name="Delseny M."/>
            <person name="Voet M."/>
            <person name="Volckaert G."/>
            <person name="Mewes H.-W."/>
            <person name="Klosterman S."/>
            <person name="Schueller C."/>
            <person name="Chalwatzis N."/>
        </authorList>
    </citation>
    <scope>NUCLEOTIDE SEQUENCE [LARGE SCALE GENOMIC DNA]</scope>
    <source>
        <strain>cv. Columbia</strain>
    </source>
</reference>
<reference key="2">
    <citation type="journal article" date="1999" name="Nature">
        <title>Sequence and analysis of chromosome 4 of the plant Arabidopsis thaliana.</title>
        <authorList>
            <person name="Mayer K.F.X."/>
            <person name="Schueller C."/>
            <person name="Wambutt R."/>
            <person name="Murphy G."/>
            <person name="Volckaert G."/>
            <person name="Pohl T."/>
            <person name="Duesterhoeft A."/>
            <person name="Stiekema W."/>
            <person name="Entian K.-D."/>
            <person name="Terryn N."/>
            <person name="Harris B."/>
            <person name="Ansorge W."/>
            <person name="Brandt P."/>
            <person name="Grivell L.A."/>
            <person name="Rieger M."/>
            <person name="Weichselgartner M."/>
            <person name="de Simone V."/>
            <person name="Obermaier B."/>
            <person name="Mache R."/>
            <person name="Mueller M."/>
            <person name="Kreis M."/>
            <person name="Delseny M."/>
            <person name="Puigdomenech P."/>
            <person name="Watson M."/>
            <person name="Schmidtheini T."/>
            <person name="Reichert B."/>
            <person name="Portetelle D."/>
            <person name="Perez-Alonso M."/>
            <person name="Boutry M."/>
            <person name="Bancroft I."/>
            <person name="Vos P."/>
            <person name="Hoheisel J."/>
            <person name="Zimmermann W."/>
            <person name="Wedler H."/>
            <person name="Ridley P."/>
            <person name="Langham S.-A."/>
            <person name="McCullagh B."/>
            <person name="Bilham L."/>
            <person name="Robben J."/>
            <person name="van der Schueren J."/>
            <person name="Grymonprez B."/>
            <person name="Chuang Y.-J."/>
            <person name="Vandenbussche F."/>
            <person name="Braeken M."/>
            <person name="Weltjens I."/>
            <person name="Voet M."/>
            <person name="Bastiaens I."/>
            <person name="Aert R."/>
            <person name="Defoor E."/>
            <person name="Weitzenegger T."/>
            <person name="Bothe G."/>
            <person name="Ramsperger U."/>
            <person name="Hilbert H."/>
            <person name="Braun M."/>
            <person name="Holzer E."/>
            <person name="Brandt A."/>
            <person name="Peters S."/>
            <person name="van Staveren M."/>
            <person name="Dirkse W."/>
            <person name="Mooijman P."/>
            <person name="Klein Lankhorst R."/>
            <person name="Rose M."/>
            <person name="Hauf J."/>
            <person name="Koetter P."/>
            <person name="Berneiser S."/>
            <person name="Hempel S."/>
            <person name="Feldpausch M."/>
            <person name="Lamberth S."/>
            <person name="Van den Daele H."/>
            <person name="De Keyser A."/>
            <person name="Buysshaert C."/>
            <person name="Gielen J."/>
            <person name="Villarroel R."/>
            <person name="De Clercq R."/>
            <person name="van Montagu M."/>
            <person name="Rogers J."/>
            <person name="Cronin A."/>
            <person name="Quail M.A."/>
            <person name="Bray-Allen S."/>
            <person name="Clark L."/>
            <person name="Doggett J."/>
            <person name="Hall S."/>
            <person name="Kay M."/>
            <person name="Lennard N."/>
            <person name="McLay K."/>
            <person name="Mayes R."/>
            <person name="Pettett A."/>
            <person name="Rajandream M.A."/>
            <person name="Lyne M."/>
            <person name="Benes V."/>
            <person name="Rechmann S."/>
            <person name="Borkova D."/>
            <person name="Bloecker H."/>
            <person name="Scharfe M."/>
            <person name="Grimm M."/>
            <person name="Loehnert T.-H."/>
            <person name="Dose S."/>
            <person name="de Haan M."/>
            <person name="Maarse A.C."/>
            <person name="Schaefer M."/>
            <person name="Mueller-Auer S."/>
            <person name="Gabel C."/>
            <person name="Fuchs M."/>
            <person name="Fartmann B."/>
            <person name="Granderath K."/>
            <person name="Dauner D."/>
            <person name="Herzl A."/>
            <person name="Neumann S."/>
            <person name="Argiriou A."/>
            <person name="Vitale D."/>
            <person name="Liguori R."/>
            <person name="Piravandi E."/>
            <person name="Massenet O."/>
            <person name="Quigley F."/>
            <person name="Clabauld G."/>
            <person name="Muendlein A."/>
            <person name="Felber R."/>
            <person name="Schnabl S."/>
            <person name="Hiller R."/>
            <person name="Schmidt W."/>
            <person name="Lecharny A."/>
            <person name="Aubourg S."/>
            <person name="Chefdor F."/>
            <person name="Cooke R."/>
            <person name="Berger C."/>
            <person name="Monfort A."/>
            <person name="Casacuberta E."/>
            <person name="Gibbons T."/>
            <person name="Weber N."/>
            <person name="Vandenbol M."/>
            <person name="Bargues M."/>
            <person name="Terol J."/>
            <person name="Torres A."/>
            <person name="Perez-Perez A."/>
            <person name="Purnelle B."/>
            <person name="Bent E."/>
            <person name="Johnson S."/>
            <person name="Tacon D."/>
            <person name="Jesse T."/>
            <person name="Heijnen L."/>
            <person name="Schwarz S."/>
            <person name="Scholler P."/>
            <person name="Heber S."/>
            <person name="Francs P."/>
            <person name="Bielke C."/>
            <person name="Frishman D."/>
            <person name="Haase D."/>
            <person name="Lemcke K."/>
            <person name="Mewes H.-W."/>
            <person name="Stocker S."/>
            <person name="Zaccaria P."/>
            <person name="Bevan M."/>
            <person name="Wilson R.K."/>
            <person name="de la Bastide M."/>
            <person name="Habermann K."/>
            <person name="Parnell L."/>
            <person name="Dedhia N."/>
            <person name="Gnoj L."/>
            <person name="Schutz K."/>
            <person name="Huang E."/>
            <person name="Spiegel L."/>
            <person name="Sekhon M."/>
            <person name="Murray J."/>
            <person name="Sheet P."/>
            <person name="Cordes M."/>
            <person name="Abu-Threideh J."/>
            <person name="Stoneking T."/>
            <person name="Kalicki J."/>
            <person name="Graves T."/>
            <person name="Harmon G."/>
            <person name="Edwards J."/>
            <person name="Latreille P."/>
            <person name="Courtney L."/>
            <person name="Cloud J."/>
            <person name="Abbott A."/>
            <person name="Scott K."/>
            <person name="Johnson D."/>
            <person name="Minx P."/>
            <person name="Bentley D."/>
            <person name="Fulton B."/>
            <person name="Miller N."/>
            <person name="Greco T."/>
            <person name="Kemp K."/>
            <person name="Kramer J."/>
            <person name="Fulton L."/>
            <person name="Mardis E."/>
            <person name="Dante M."/>
            <person name="Pepin K."/>
            <person name="Hillier L.W."/>
            <person name="Nelson J."/>
            <person name="Spieth J."/>
            <person name="Ryan E."/>
            <person name="Andrews S."/>
            <person name="Geisel C."/>
            <person name="Layman D."/>
            <person name="Du H."/>
            <person name="Ali J."/>
            <person name="Berghoff A."/>
            <person name="Jones K."/>
            <person name="Drone K."/>
            <person name="Cotton M."/>
            <person name="Joshu C."/>
            <person name="Antonoiu B."/>
            <person name="Zidanic M."/>
            <person name="Strong C."/>
            <person name="Sun H."/>
            <person name="Lamar B."/>
            <person name="Yordan C."/>
            <person name="Ma P."/>
            <person name="Zhong J."/>
            <person name="Preston R."/>
            <person name="Vil D."/>
            <person name="Shekher M."/>
            <person name="Matero A."/>
            <person name="Shah R."/>
            <person name="Swaby I.K."/>
            <person name="O'Shaughnessy A."/>
            <person name="Rodriguez M."/>
            <person name="Hoffman J."/>
            <person name="Till S."/>
            <person name="Granat S."/>
            <person name="Shohdy N."/>
            <person name="Hasegawa A."/>
            <person name="Hameed A."/>
            <person name="Lodhi M."/>
            <person name="Johnson A."/>
            <person name="Chen E."/>
            <person name="Marra M.A."/>
            <person name="Martienssen R."/>
            <person name="McCombie W.R."/>
        </authorList>
    </citation>
    <scope>NUCLEOTIDE SEQUENCE [LARGE SCALE GENOMIC DNA]</scope>
    <source>
        <strain>cv. Columbia</strain>
    </source>
</reference>
<reference key="3">
    <citation type="journal article" date="2017" name="Plant J.">
        <title>Araport11: a complete reannotation of the Arabidopsis thaliana reference genome.</title>
        <authorList>
            <person name="Cheng C.Y."/>
            <person name="Krishnakumar V."/>
            <person name="Chan A.P."/>
            <person name="Thibaud-Nissen F."/>
            <person name="Schobel S."/>
            <person name="Town C.D."/>
        </authorList>
    </citation>
    <scope>GENOME REANNOTATION</scope>
    <source>
        <strain>cv. Columbia</strain>
    </source>
</reference>
<reference key="4">
    <citation type="submission" date="2004-10" db="EMBL/GenBank/DDBJ databases">
        <title>Arabidopsis ORF clones.</title>
        <authorList>
            <person name="Cheuk R.F."/>
            <person name="Chen H."/>
            <person name="Kim C.J."/>
            <person name="Shinn P."/>
            <person name="Ecker J.R."/>
        </authorList>
    </citation>
    <scope>NUCLEOTIDE SEQUENCE [LARGE SCALE MRNA] OF 6-477</scope>
    <source>
        <strain>cv. Columbia</strain>
    </source>
</reference>
<reference key="5">
    <citation type="submission" date="2004-11" db="EMBL/GenBank/DDBJ databases">
        <title>Arabidopsis ORF clones.</title>
        <authorList>
            <person name="Shinn P."/>
            <person name="Chen H."/>
            <person name="Cheuk R.F."/>
            <person name="Kim C.J."/>
            <person name="Ecker J.R."/>
        </authorList>
    </citation>
    <scope>NUCLEOTIDE SEQUENCE [LARGE SCALE MRNA] OF 20-477</scope>
    <source>
        <strain>cv. Columbia</strain>
    </source>
</reference>
<reference key="6">
    <citation type="journal article" date="2000" name="Plant Mol. Biol.">
        <title>In Arabidopsis thaliana, 1% of the genome codes for a novel protein family unique to plants.</title>
        <authorList>
            <person name="Aubourg S."/>
            <person name="Boudet N."/>
            <person name="Kreis M."/>
            <person name="Lecharny A."/>
        </authorList>
    </citation>
    <scope>GENE FAMILY</scope>
</reference>
<reference key="7">
    <citation type="journal article" date="2004" name="Plant Cell">
        <title>Genome-wide analysis of Arabidopsis pentatricopeptide repeat proteins reveals their essential role in organelle biogenesis.</title>
        <authorList>
            <person name="Lurin C."/>
            <person name="Andres C."/>
            <person name="Aubourg S."/>
            <person name="Bellaoui M."/>
            <person name="Bitton F."/>
            <person name="Bruyere C."/>
            <person name="Caboche M."/>
            <person name="Debast C."/>
            <person name="Gualberto J."/>
            <person name="Hoffmann B."/>
            <person name="Lecharny A."/>
            <person name="Le Ret M."/>
            <person name="Martin-Magniette M.-L."/>
            <person name="Mireau H."/>
            <person name="Peeters N."/>
            <person name="Renou J.-P."/>
            <person name="Szurek B."/>
            <person name="Taconnat L."/>
            <person name="Small I."/>
        </authorList>
    </citation>
    <scope>GENE FAMILY</scope>
</reference>
<protein>
    <recommendedName>
        <fullName>Pentatricopeptide repeat-containing protein At4g14170</fullName>
    </recommendedName>
</protein>
<comment type="similarity">
    <text evidence="1">Belongs to the PPR family. PCMP-E subfamily.</text>
</comment>
<comment type="sequence caution" evidence="1">
    <conflict type="erroneous initiation">
        <sequence resource="EMBL-CDS" id="AAU94392"/>
    </conflict>
</comment>
<comment type="sequence caution" evidence="1">
    <conflict type="erroneous gene model prediction">
        <sequence resource="EMBL-CDS" id="CAB10196"/>
    </conflict>
</comment>
<comment type="sequence caution" evidence="1">
    <conflict type="erroneous gene model prediction">
        <sequence resource="EMBL-CDS" id="CAB78459"/>
    </conflict>
</comment>
<comment type="online information" name="Pentatricopeptide repeat proteins">
    <link uri="https://ppr.plantenergy.uwa.edu.au"/>
</comment>
<keyword id="KW-1185">Reference proteome</keyword>
<keyword id="KW-0677">Repeat</keyword>
<feature type="chain" id="PRO_0000363427" description="Pentatricopeptide repeat-containing protein At4g14170">
    <location>
        <begin position="1"/>
        <end position="477"/>
    </location>
</feature>
<feature type="repeat" description="PPR 1">
    <location>
        <begin position="65"/>
        <end position="96"/>
    </location>
</feature>
<feature type="repeat" description="PPR 2">
    <location>
        <begin position="97"/>
        <end position="131"/>
    </location>
</feature>
<feature type="repeat" description="PPR 3">
    <location>
        <begin position="133"/>
        <end position="167"/>
    </location>
</feature>
<feature type="repeat" description="PPR 4">
    <location>
        <begin position="168"/>
        <end position="198"/>
    </location>
</feature>
<feature type="repeat" description="PPR 5">
    <location>
        <begin position="199"/>
        <end position="233"/>
    </location>
</feature>
<feature type="repeat" description="PPR 6">
    <location>
        <begin position="234"/>
        <end position="264"/>
    </location>
</feature>
<feature type="repeat" description="PPR 7">
    <location>
        <begin position="269"/>
        <end position="299"/>
    </location>
</feature>
<feature type="repeat" description="PPR 8">
    <location>
        <begin position="300"/>
        <end position="334"/>
    </location>
</feature>
<feature type="repeat" description="PPR 9">
    <location>
        <begin position="335"/>
        <end position="369"/>
    </location>
</feature>
<feature type="repeat" description="PPR 10">
    <location>
        <begin position="370"/>
        <end position="400"/>
    </location>
</feature>
<feature type="region of interest" description="Type E motif; degenerate">
    <location>
        <begin position="405"/>
        <end position="477"/>
    </location>
</feature>
<accession>Q5XEY7</accession>
<accession>O23276</accession>
<sequence length="477" mass="53253">MHLPSSSSLYSSPTKSLFAMFLKARALSVTTQNPPDLFSLLHHSPNAKHLRHLHAHLLRTFLYSNVVLSSKLVLAYSKLNHLFPTSLSVFWHMPYRNIFSWNIIIGEFSRSGFASKSIDLFLRMWRESCVRPDDFTLPLILRACSASREAKSGDLIHVLCLKLGFSSSLFVSSALVIMYVDMGKLLHARKLFDDMPVRDSVLYTAMFGGYVQQGEAMLGLAMFREMGYSGFALDSVVMVSLLMACGQLGALKHGKSVHGWCIRRCSCLGLNLGNAITDMYVKCSILDYAHTVFVNMSRRDVISWSSLILGYGLDGDVVMSFKLFDEMLKEGIEPNAVTFLGVLSACAHGGLVEKSWLYFRLMQEYNIVPELKHYASVADCMSRAGLLEEAEKFLEDMPVKPDEAVMGAVLSGCKVYGNVEVGERVARELIQLKPRKASYYVTLAGLYSAAGRFDEAESLRQWMKEKQISKVPGCSSI</sequence>
<name>PP309_ARATH</name>
<organism>
    <name type="scientific">Arabidopsis thaliana</name>
    <name type="common">Mouse-ear cress</name>
    <dbReference type="NCBI Taxonomy" id="3702"/>
    <lineage>
        <taxon>Eukaryota</taxon>
        <taxon>Viridiplantae</taxon>
        <taxon>Streptophyta</taxon>
        <taxon>Embryophyta</taxon>
        <taxon>Tracheophyta</taxon>
        <taxon>Spermatophyta</taxon>
        <taxon>Magnoliopsida</taxon>
        <taxon>eudicotyledons</taxon>
        <taxon>Gunneridae</taxon>
        <taxon>Pentapetalae</taxon>
        <taxon>rosids</taxon>
        <taxon>malvids</taxon>
        <taxon>Brassicales</taxon>
        <taxon>Brassicaceae</taxon>
        <taxon>Camelineae</taxon>
        <taxon>Arabidopsis</taxon>
    </lineage>
</organism>